<feature type="chain" id="PRO_0000150212" description="Phosphoserine aminotransferase">
    <location>
        <begin position="1"/>
        <end position="364"/>
    </location>
</feature>
<feature type="binding site" evidence="1">
    <location>
        <position position="41"/>
    </location>
    <ligand>
        <name>L-glutamate</name>
        <dbReference type="ChEBI" id="CHEBI:29985"/>
    </ligand>
</feature>
<feature type="binding site" evidence="1">
    <location>
        <begin position="75"/>
        <end position="76"/>
    </location>
    <ligand>
        <name>pyridoxal 5'-phosphate</name>
        <dbReference type="ChEBI" id="CHEBI:597326"/>
    </ligand>
</feature>
<feature type="binding site" evidence="1">
    <location>
        <position position="100"/>
    </location>
    <ligand>
        <name>pyridoxal 5'-phosphate</name>
        <dbReference type="ChEBI" id="CHEBI:597326"/>
    </ligand>
</feature>
<feature type="binding site" evidence="1">
    <location>
        <position position="155"/>
    </location>
    <ligand>
        <name>pyridoxal 5'-phosphate</name>
        <dbReference type="ChEBI" id="CHEBI:597326"/>
    </ligand>
</feature>
<feature type="binding site" evidence="1">
    <location>
        <position position="175"/>
    </location>
    <ligand>
        <name>pyridoxal 5'-phosphate</name>
        <dbReference type="ChEBI" id="CHEBI:597326"/>
    </ligand>
</feature>
<feature type="binding site" evidence="1">
    <location>
        <position position="198"/>
    </location>
    <ligand>
        <name>pyridoxal 5'-phosphate</name>
        <dbReference type="ChEBI" id="CHEBI:597326"/>
    </ligand>
</feature>
<feature type="binding site" evidence="1">
    <location>
        <begin position="239"/>
        <end position="240"/>
    </location>
    <ligand>
        <name>pyridoxal 5'-phosphate</name>
        <dbReference type="ChEBI" id="CHEBI:597326"/>
    </ligand>
</feature>
<feature type="modified residue" description="N6-(pyridoxal phosphate)lysine" evidence="1">
    <location>
        <position position="199"/>
    </location>
</feature>
<sequence length="364" mass="40285">MTIYNFSAGPATLPKPVLEKAQAELLNYQDSGMSVLEMSHRSPEFDKIIKDAEATLRELMAIPDNYKVIFLQGGASTQFTMVPLNLAQGKKAYYLVGGSWGKKAYTEAVKLSKTIPFEPILLASSEDTVYDHIPSFDPSTIDPEAAYVHLTTNNTIEGTSIYDLPDTNGVPIVADMSSNILAARYNVEDFALIYAGAQKNIGPAGVTVVIVREDFLNDQPQLSAMLDYRIQAEAGSLYNTPPCFNIYISKLVFDWVKNEIGGVDKMAEIQREKSGLLYDYIESSDFYTNPVKDAKDRSVCNIPFVTPSKDLDAKFVAEADALGFKNIKGHRSVGGMRASVYNAFPRQGVLDLIDFMKKFEDENK</sequence>
<accession>Q5LYP0</accession>
<proteinExistence type="inferred from homology"/>
<keyword id="KW-0028">Amino-acid biosynthesis</keyword>
<keyword id="KW-0032">Aminotransferase</keyword>
<keyword id="KW-0963">Cytoplasm</keyword>
<keyword id="KW-0663">Pyridoxal phosphate</keyword>
<keyword id="KW-0664">Pyridoxine biosynthesis</keyword>
<keyword id="KW-0718">Serine biosynthesis</keyword>
<keyword id="KW-0808">Transferase</keyword>
<comment type="function">
    <text evidence="1">Catalyzes the reversible conversion of 3-phosphohydroxypyruvate to phosphoserine and of 3-hydroxy-2-oxo-4-phosphonooxybutanoate to phosphohydroxythreonine.</text>
</comment>
<comment type="catalytic activity">
    <reaction evidence="1">
        <text>O-phospho-L-serine + 2-oxoglutarate = 3-phosphooxypyruvate + L-glutamate</text>
        <dbReference type="Rhea" id="RHEA:14329"/>
        <dbReference type="ChEBI" id="CHEBI:16810"/>
        <dbReference type="ChEBI" id="CHEBI:18110"/>
        <dbReference type="ChEBI" id="CHEBI:29985"/>
        <dbReference type="ChEBI" id="CHEBI:57524"/>
        <dbReference type="EC" id="2.6.1.52"/>
    </reaction>
</comment>
<comment type="catalytic activity">
    <reaction evidence="1">
        <text>4-(phosphooxy)-L-threonine + 2-oxoglutarate = (R)-3-hydroxy-2-oxo-4-phosphooxybutanoate + L-glutamate</text>
        <dbReference type="Rhea" id="RHEA:16573"/>
        <dbReference type="ChEBI" id="CHEBI:16810"/>
        <dbReference type="ChEBI" id="CHEBI:29985"/>
        <dbReference type="ChEBI" id="CHEBI:58452"/>
        <dbReference type="ChEBI" id="CHEBI:58538"/>
        <dbReference type="EC" id="2.6.1.52"/>
    </reaction>
</comment>
<comment type="cofactor">
    <cofactor evidence="1">
        <name>pyridoxal 5'-phosphate</name>
        <dbReference type="ChEBI" id="CHEBI:597326"/>
    </cofactor>
    <text evidence="1">Binds 1 pyridoxal phosphate per subunit.</text>
</comment>
<comment type="pathway">
    <text evidence="1">Amino-acid biosynthesis; L-serine biosynthesis; L-serine from 3-phospho-D-glycerate: step 2/3.</text>
</comment>
<comment type="subunit">
    <text evidence="1">Homodimer.</text>
</comment>
<comment type="subcellular location">
    <subcellularLocation>
        <location evidence="1">Cytoplasm</location>
    </subcellularLocation>
</comment>
<comment type="similarity">
    <text evidence="1">Belongs to the class-V pyridoxal-phosphate-dependent aminotransferase family. SerC subfamily.</text>
</comment>
<gene>
    <name evidence="1" type="primary">serC</name>
    <name type="ordered locus">str1529</name>
</gene>
<protein>
    <recommendedName>
        <fullName evidence="1">Phosphoserine aminotransferase</fullName>
        <ecNumber evidence="1">2.6.1.52</ecNumber>
    </recommendedName>
    <alternativeName>
        <fullName evidence="1">Phosphohydroxythreonine aminotransferase</fullName>
        <shortName evidence="1">PSAT</shortName>
    </alternativeName>
</protein>
<evidence type="ECO:0000255" key="1">
    <source>
        <dbReference type="HAMAP-Rule" id="MF_00160"/>
    </source>
</evidence>
<dbReference type="EC" id="2.6.1.52" evidence="1"/>
<dbReference type="EMBL" id="CP000024">
    <property type="protein sequence ID" value="AAV63060.1"/>
    <property type="molecule type" value="Genomic_DNA"/>
</dbReference>
<dbReference type="RefSeq" id="WP_011227455.1">
    <property type="nucleotide sequence ID" value="NC_006449.1"/>
</dbReference>
<dbReference type="SMR" id="Q5LYP0"/>
<dbReference type="GeneID" id="66899277"/>
<dbReference type="KEGG" id="stc:str1529"/>
<dbReference type="HOGENOM" id="CLU_034866_0_2_9"/>
<dbReference type="UniPathway" id="UPA00135">
    <property type="reaction ID" value="UER00197"/>
</dbReference>
<dbReference type="GO" id="GO:0005737">
    <property type="term" value="C:cytoplasm"/>
    <property type="evidence" value="ECO:0007669"/>
    <property type="project" value="UniProtKB-SubCell"/>
</dbReference>
<dbReference type="GO" id="GO:0004648">
    <property type="term" value="F:O-phospho-L-serine:2-oxoglutarate aminotransferase activity"/>
    <property type="evidence" value="ECO:0007669"/>
    <property type="project" value="UniProtKB-UniRule"/>
</dbReference>
<dbReference type="GO" id="GO:0030170">
    <property type="term" value="F:pyridoxal phosphate binding"/>
    <property type="evidence" value="ECO:0007669"/>
    <property type="project" value="UniProtKB-UniRule"/>
</dbReference>
<dbReference type="GO" id="GO:0006564">
    <property type="term" value="P:L-serine biosynthetic process"/>
    <property type="evidence" value="ECO:0007669"/>
    <property type="project" value="UniProtKB-UniRule"/>
</dbReference>
<dbReference type="GO" id="GO:0008615">
    <property type="term" value="P:pyridoxine biosynthetic process"/>
    <property type="evidence" value="ECO:0007669"/>
    <property type="project" value="UniProtKB-KW"/>
</dbReference>
<dbReference type="FunFam" id="3.40.640.10:FF:000010">
    <property type="entry name" value="Phosphoserine aminotransferase"/>
    <property type="match status" value="1"/>
</dbReference>
<dbReference type="FunFam" id="3.90.1150.10:FF:000006">
    <property type="entry name" value="Phosphoserine aminotransferase"/>
    <property type="match status" value="1"/>
</dbReference>
<dbReference type="Gene3D" id="3.90.1150.10">
    <property type="entry name" value="Aspartate Aminotransferase, domain 1"/>
    <property type="match status" value="1"/>
</dbReference>
<dbReference type="Gene3D" id="3.40.640.10">
    <property type="entry name" value="Type I PLP-dependent aspartate aminotransferase-like (Major domain)"/>
    <property type="match status" value="1"/>
</dbReference>
<dbReference type="HAMAP" id="MF_00160">
    <property type="entry name" value="SerC_aminotrans_5"/>
    <property type="match status" value="1"/>
</dbReference>
<dbReference type="InterPro" id="IPR000192">
    <property type="entry name" value="Aminotrans_V_dom"/>
</dbReference>
<dbReference type="InterPro" id="IPR022278">
    <property type="entry name" value="Pser_aminoTfrase"/>
</dbReference>
<dbReference type="InterPro" id="IPR015424">
    <property type="entry name" value="PyrdxlP-dep_Trfase"/>
</dbReference>
<dbReference type="InterPro" id="IPR015421">
    <property type="entry name" value="PyrdxlP-dep_Trfase_major"/>
</dbReference>
<dbReference type="InterPro" id="IPR015422">
    <property type="entry name" value="PyrdxlP-dep_Trfase_small"/>
</dbReference>
<dbReference type="NCBIfam" id="NF003764">
    <property type="entry name" value="PRK05355.1"/>
    <property type="match status" value="1"/>
</dbReference>
<dbReference type="NCBIfam" id="TIGR01364">
    <property type="entry name" value="serC_1"/>
    <property type="match status" value="1"/>
</dbReference>
<dbReference type="PANTHER" id="PTHR43247">
    <property type="entry name" value="PHOSPHOSERINE AMINOTRANSFERASE"/>
    <property type="match status" value="1"/>
</dbReference>
<dbReference type="PANTHER" id="PTHR43247:SF1">
    <property type="entry name" value="PHOSPHOSERINE AMINOTRANSFERASE"/>
    <property type="match status" value="1"/>
</dbReference>
<dbReference type="Pfam" id="PF00266">
    <property type="entry name" value="Aminotran_5"/>
    <property type="match status" value="1"/>
</dbReference>
<dbReference type="PIRSF" id="PIRSF000525">
    <property type="entry name" value="SerC"/>
    <property type="match status" value="1"/>
</dbReference>
<dbReference type="SUPFAM" id="SSF53383">
    <property type="entry name" value="PLP-dependent transferases"/>
    <property type="match status" value="1"/>
</dbReference>
<organism>
    <name type="scientific">Streptococcus thermophilus (strain CNRZ 1066)</name>
    <dbReference type="NCBI Taxonomy" id="299768"/>
    <lineage>
        <taxon>Bacteria</taxon>
        <taxon>Bacillati</taxon>
        <taxon>Bacillota</taxon>
        <taxon>Bacilli</taxon>
        <taxon>Lactobacillales</taxon>
        <taxon>Streptococcaceae</taxon>
        <taxon>Streptococcus</taxon>
    </lineage>
</organism>
<reference key="1">
    <citation type="journal article" date="2004" name="Nat. Biotechnol.">
        <title>Complete sequence and comparative genome analysis of the dairy bacterium Streptococcus thermophilus.</title>
        <authorList>
            <person name="Bolotin A."/>
            <person name="Quinquis B."/>
            <person name="Renault P."/>
            <person name="Sorokin A."/>
            <person name="Ehrlich S.D."/>
            <person name="Kulakauskas S."/>
            <person name="Lapidus A."/>
            <person name="Goltsman E."/>
            <person name="Mazur M."/>
            <person name="Pusch G.D."/>
            <person name="Fonstein M."/>
            <person name="Overbeek R."/>
            <person name="Kyprides N."/>
            <person name="Purnelle B."/>
            <person name="Prozzi D."/>
            <person name="Ngui K."/>
            <person name="Masuy D."/>
            <person name="Hancy F."/>
            <person name="Burteau S."/>
            <person name="Boutry M."/>
            <person name="Delcour J."/>
            <person name="Goffeau A."/>
            <person name="Hols P."/>
        </authorList>
    </citation>
    <scope>NUCLEOTIDE SEQUENCE [LARGE SCALE GENOMIC DNA]</scope>
    <source>
        <strain>CNRZ 1066</strain>
    </source>
</reference>
<name>SERC_STRT1</name>